<dbReference type="EC" id="3.6.1.1" evidence="1"/>
<dbReference type="EMBL" id="AE016879">
    <property type="protein sequence ID" value="AAP26658.1"/>
    <property type="molecule type" value="Genomic_DNA"/>
</dbReference>
<dbReference type="EMBL" id="AE017334">
    <property type="protein sequence ID" value="AAT31943.1"/>
    <property type="molecule type" value="Genomic_DNA"/>
</dbReference>
<dbReference type="EMBL" id="AE017225">
    <property type="protein sequence ID" value="AAT54945.1"/>
    <property type="molecule type" value="Genomic_DNA"/>
</dbReference>
<dbReference type="RefSeq" id="NP_845172.1">
    <property type="nucleotide sequence ID" value="NC_003997.3"/>
</dbReference>
<dbReference type="RefSeq" id="WP_000416849.1">
    <property type="nucleotide sequence ID" value="NZ_WXXJ01000026.1"/>
</dbReference>
<dbReference type="RefSeq" id="YP_028894.1">
    <property type="nucleotide sequence ID" value="NC_005945.1"/>
</dbReference>
<dbReference type="SMR" id="Q81PH9"/>
<dbReference type="IntAct" id="Q81PH9">
    <property type="interactions" value="2"/>
</dbReference>
<dbReference type="STRING" id="261594.GBAA_2826"/>
<dbReference type="DNASU" id="1088406"/>
<dbReference type="GeneID" id="45022660"/>
<dbReference type="KEGG" id="ban:BA_2826"/>
<dbReference type="KEGG" id="bar:GBAA_2826"/>
<dbReference type="KEGG" id="bat:BAS2635"/>
<dbReference type="PATRIC" id="fig|198094.11.peg.2809"/>
<dbReference type="eggNOG" id="COG1227">
    <property type="taxonomic scope" value="Bacteria"/>
</dbReference>
<dbReference type="HOGENOM" id="CLU_025243_0_1_9"/>
<dbReference type="OMA" id="VGCSNTI"/>
<dbReference type="OrthoDB" id="9766150at2"/>
<dbReference type="Proteomes" id="UP000000427">
    <property type="component" value="Chromosome"/>
</dbReference>
<dbReference type="Proteomes" id="UP000000594">
    <property type="component" value="Chromosome"/>
</dbReference>
<dbReference type="GO" id="GO:0005737">
    <property type="term" value="C:cytoplasm"/>
    <property type="evidence" value="ECO:0007669"/>
    <property type="project" value="UniProtKB-SubCell"/>
</dbReference>
<dbReference type="GO" id="GO:0004427">
    <property type="term" value="F:inorganic diphosphate phosphatase activity"/>
    <property type="evidence" value="ECO:0007669"/>
    <property type="project" value="UniProtKB-UniRule"/>
</dbReference>
<dbReference type="GO" id="GO:0030145">
    <property type="term" value="F:manganese ion binding"/>
    <property type="evidence" value="ECO:0007669"/>
    <property type="project" value="UniProtKB-UniRule"/>
</dbReference>
<dbReference type="FunFam" id="3.10.310.20:FF:000001">
    <property type="entry name" value="Probable manganese-dependent inorganic pyrophosphatase"/>
    <property type="match status" value="1"/>
</dbReference>
<dbReference type="FunFam" id="3.90.1640.10:FF:000001">
    <property type="entry name" value="Probable manganese-dependent inorganic pyrophosphatase"/>
    <property type="match status" value="1"/>
</dbReference>
<dbReference type="Gene3D" id="3.10.310.20">
    <property type="entry name" value="DHHA2 domain"/>
    <property type="match status" value="1"/>
</dbReference>
<dbReference type="Gene3D" id="3.90.1640.10">
    <property type="entry name" value="inorganic pyrophosphatase (n-terminal core)"/>
    <property type="match status" value="1"/>
</dbReference>
<dbReference type="HAMAP" id="MF_00207">
    <property type="entry name" value="PPase_C"/>
    <property type="match status" value="1"/>
</dbReference>
<dbReference type="InterPro" id="IPR001667">
    <property type="entry name" value="DDH_dom"/>
</dbReference>
<dbReference type="InterPro" id="IPR038763">
    <property type="entry name" value="DHH_sf"/>
</dbReference>
<dbReference type="InterPro" id="IPR004097">
    <property type="entry name" value="DHHA2"/>
</dbReference>
<dbReference type="InterPro" id="IPR038222">
    <property type="entry name" value="DHHA2_dom_sf"/>
</dbReference>
<dbReference type="InterPro" id="IPR022934">
    <property type="entry name" value="Mn-dep_inorganic_PyrPase"/>
</dbReference>
<dbReference type="NCBIfam" id="NF003877">
    <property type="entry name" value="PRK05427.1"/>
    <property type="match status" value="1"/>
</dbReference>
<dbReference type="PANTHER" id="PTHR12112">
    <property type="entry name" value="BNIP - RELATED"/>
    <property type="match status" value="1"/>
</dbReference>
<dbReference type="PANTHER" id="PTHR12112:SF22">
    <property type="entry name" value="MANGANESE-DEPENDENT INORGANIC PYROPHOSPHATASE-RELATED"/>
    <property type="match status" value="1"/>
</dbReference>
<dbReference type="Pfam" id="PF01368">
    <property type="entry name" value="DHH"/>
    <property type="match status" value="1"/>
</dbReference>
<dbReference type="Pfam" id="PF02833">
    <property type="entry name" value="DHHA2"/>
    <property type="match status" value="1"/>
</dbReference>
<dbReference type="SMART" id="SM01131">
    <property type="entry name" value="DHHA2"/>
    <property type="match status" value="1"/>
</dbReference>
<dbReference type="SUPFAM" id="SSF64182">
    <property type="entry name" value="DHH phosphoesterases"/>
    <property type="match status" value="1"/>
</dbReference>
<proteinExistence type="inferred from homology"/>
<gene>
    <name evidence="1" type="primary">ppaC</name>
    <name type="ordered locus">BA_2826</name>
    <name type="ordered locus">GBAA_2826</name>
    <name type="ordered locus">BAS2635</name>
</gene>
<sequence length="309" mass="33748">MEKVLVFGHKNPDTDAICSAIAYAELKKELGMNAEPVRLGEISGETQFALDYFKVEGPRFVETVANEVDNVILVDHNERQQSANDIESVRVLEVIDHHRIANFETSDPIYYRCEPVGCTATILNKMYKENGVTIRKEVAGLMLSAIISDSLLFKSPTCTEQDVAAARELAEIAGVDADKYGLEMLKAGADLSGKTMEQLISLDAKEFQMGNAKVEIAQVNAVDTNDVLVHQAELEKVISAVVEEKGLDLFLFVVTDILTNDSVGLAIGKAANIVEKAYNVSLENNTATLKGVVSRKKQIVPVLTEAFQA</sequence>
<evidence type="ECO:0000255" key="1">
    <source>
        <dbReference type="HAMAP-Rule" id="MF_00207"/>
    </source>
</evidence>
<reference key="1">
    <citation type="journal article" date="2003" name="Nature">
        <title>The genome sequence of Bacillus anthracis Ames and comparison to closely related bacteria.</title>
        <authorList>
            <person name="Read T.D."/>
            <person name="Peterson S.N."/>
            <person name="Tourasse N.J."/>
            <person name="Baillie L.W."/>
            <person name="Paulsen I.T."/>
            <person name="Nelson K.E."/>
            <person name="Tettelin H."/>
            <person name="Fouts D.E."/>
            <person name="Eisen J.A."/>
            <person name="Gill S.R."/>
            <person name="Holtzapple E.K."/>
            <person name="Okstad O.A."/>
            <person name="Helgason E."/>
            <person name="Rilstone J."/>
            <person name="Wu M."/>
            <person name="Kolonay J.F."/>
            <person name="Beanan M.J."/>
            <person name="Dodson R.J."/>
            <person name="Brinkac L.M."/>
            <person name="Gwinn M.L."/>
            <person name="DeBoy R.T."/>
            <person name="Madpu R."/>
            <person name="Daugherty S.C."/>
            <person name="Durkin A.S."/>
            <person name="Haft D.H."/>
            <person name="Nelson W.C."/>
            <person name="Peterson J.D."/>
            <person name="Pop M."/>
            <person name="Khouri H.M."/>
            <person name="Radune D."/>
            <person name="Benton J.L."/>
            <person name="Mahamoud Y."/>
            <person name="Jiang L."/>
            <person name="Hance I.R."/>
            <person name="Weidman J.F."/>
            <person name="Berry K.J."/>
            <person name="Plaut R.D."/>
            <person name="Wolf A.M."/>
            <person name="Watkins K.L."/>
            <person name="Nierman W.C."/>
            <person name="Hazen A."/>
            <person name="Cline R.T."/>
            <person name="Redmond C."/>
            <person name="Thwaite J.E."/>
            <person name="White O."/>
            <person name="Salzberg S.L."/>
            <person name="Thomason B."/>
            <person name="Friedlander A.M."/>
            <person name="Koehler T.M."/>
            <person name="Hanna P.C."/>
            <person name="Kolstoe A.-B."/>
            <person name="Fraser C.M."/>
        </authorList>
    </citation>
    <scope>NUCLEOTIDE SEQUENCE [LARGE SCALE GENOMIC DNA]</scope>
    <source>
        <strain>Ames / isolate Porton</strain>
    </source>
</reference>
<reference key="2">
    <citation type="journal article" date="2009" name="J. Bacteriol.">
        <title>The complete genome sequence of Bacillus anthracis Ames 'Ancestor'.</title>
        <authorList>
            <person name="Ravel J."/>
            <person name="Jiang L."/>
            <person name="Stanley S.T."/>
            <person name="Wilson M.R."/>
            <person name="Decker R.S."/>
            <person name="Read T.D."/>
            <person name="Worsham P."/>
            <person name="Keim P.S."/>
            <person name="Salzberg S.L."/>
            <person name="Fraser-Liggett C.M."/>
            <person name="Rasko D.A."/>
        </authorList>
    </citation>
    <scope>NUCLEOTIDE SEQUENCE [LARGE SCALE GENOMIC DNA]</scope>
    <source>
        <strain>Ames ancestor</strain>
    </source>
</reference>
<reference key="3">
    <citation type="submission" date="2004-01" db="EMBL/GenBank/DDBJ databases">
        <title>Complete genome sequence of Bacillus anthracis Sterne.</title>
        <authorList>
            <person name="Brettin T.S."/>
            <person name="Bruce D."/>
            <person name="Challacombe J.F."/>
            <person name="Gilna P."/>
            <person name="Han C."/>
            <person name="Hill K."/>
            <person name="Hitchcock P."/>
            <person name="Jackson P."/>
            <person name="Keim P."/>
            <person name="Longmire J."/>
            <person name="Lucas S."/>
            <person name="Okinaka R."/>
            <person name="Richardson P."/>
            <person name="Rubin E."/>
            <person name="Tice H."/>
        </authorList>
    </citation>
    <scope>NUCLEOTIDE SEQUENCE [LARGE SCALE GENOMIC DNA]</scope>
    <source>
        <strain>Sterne</strain>
    </source>
</reference>
<protein>
    <recommendedName>
        <fullName evidence="1">Probable manganese-dependent inorganic pyrophosphatase</fullName>
        <ecNumber evidence="1">3.6.1.1</ecNumber>
    </recommendedName>
    <alternativeName>
        <fullName evidence="1">Pyrophosphate phospho-hydrolase</fullName>
        <shortName evidence="1">PPase</shortName>
    </alternativeName>
</protein>
<keyword id="KW-0963">Cytoplasm</keyword>
<keyword id="KW-0378">Hydrolase</keyword>
<keyword id="KW-0464">Manganese</keyword>
<keyword id="KW-0479">Metal-binding</keyword>
<keyword id="KW-1185">Reference proteome</keyword>
<feature type="chain" id="PRO_0000158566" description="Probable manganese-dependent inorganic pyrophosphatase">
    <location>
        <begin position="1"/>
        <end position="309"/>
    </location>
</feature>
<feature type="binding site" evidence="1">
    <location>
        <position position="9"/>
    </location>
    <ligand>
        <name>Mn(2+)</name>
        <dbReference type="ChEBI" id="CHEBI:29035"/>
        <label>1</label>
    </ligand>
</feature>
<feature type="binding site" evidence="1">
    <location>
        <position position="13"/>
    </location>
    <ligand>
        <name>Mn(2+)</name>
        <dbReference type="ChEBI" id="CHEBI:29035"/>
        <label>1</label>
    </ligand>
</feature>
<feature type="binding site" evidence="1">
    <location>
        <position position="15"/>
    </location>
    <ligand>
        <name>Mn(2+)</name>
        <dbReference type="ChEBI" id="CHEBI:29035"/>
        <label>2</label>
    </ligand>
</feature>
<feature type="binding site" evidence="1">
    <location>
        <position position="75"/>
    </location>
    <ligand>
        <name>Mn(2+)</name>
        <dbReference type="ChEBI" id="CHEBI:29035"/>
        <label>1</label>
    </ligand>
</feature>
<feature type="binding site" evidence="1">
    <location>
        <position position="75"/>
    </location>
    <ligand>
        <name>Mn(2+)</name>
        <dbReference type="ChEBI" id="CHEBI:29035"/>
        <label>2</label>
    </ligand>
</feature>
<feature type="binding site" evidence="1">
    <location>
        <position position="97"/>
    </location>
    <ligand>
        <name>Mn(2+)</name>
        <dbReference type="ChEBI" id="CHEBI:29035"/>
        <label>2</label>
    </ligand>
</feature>
<feature type="binding site" evidence="1">
    <location>
        <position position="149"/>
    </location>
    <ligand>
        <name>Mn(2+)</name>
        <dbReference type="ChEBI" id="CHEBI:29035"/>
        <label>2</label>
    </ligand>
</feature>
<accession>Q81PH9</accession>
<accession>Q6HXP4</accession>
<accession>Q6KRR8</accession>
<name>PPAC_BACAN</name>
<organism>
    <name type="scientific">Bacillus anthracis</name>
    <dbReference type="NCBI Taxonomy" id="1392"/>
    <lineage>
        <taxon>Bacteria</taxon>
        <taxon>Bacillati</taxon>
        <taxon>Bacillota</taxon>
        <taxon>Bacilli</taxon>
        <taxon>Bacillales</taxon>
        <taxon>Bacillaceae</taxon>
        <taxon>Bacillus</taxon>
        <taxon>Bacillus cereus group</taxon>
    </lineage>
</organism>
<comment type="catalytic activity">
    <reaction evidence="1">
        <text>diphosphate + H2O = 2 phosphate + H(+)</text>
        <dbReference type="Rhea" id="RHEA:24576"/>
        <dbReference type="ChEBI" id="CHEBI:15377"/>
        <dbReference type="ChEBI" id="CHEBI:15378"/>
        <dbReference type="ChEBI" id="CHEBI:33019"/>
        <dbReference type="ChEBI" id="CHEBI:43474"/>
        <dbReference type="EC" id="3.6.1.1"/>
    </reaction>
</comment>
<comment type="cofactor">
    <cofactor evidence="1">
        <name>Mn(2+)</name>
        <dbReference type="ChEBI" id="CHEBI:29035"/>
    </cofactor>
    <text evidence="1">Binds 2 manganese ions per subunit.</text>
</comment>
<comment type="subcellular location">
    <subcellularLocation>
        <location evidence="1">Cytoplasm</location>
    </subcellularLocation>
</comment>
<comment type="similarity">
    <text evidence="1">Belongs to the PPase class C family.</text>
</comment>